<evidence type="ECO:0000250" key="1"/>
<evidence type="ECO:0000255" key="2"/>
<evidence type="ECO:0000305" key="3"/>
<organism>
    <name type="scientific">Lotus japonicus</name>
    <name type="common">Lotus corniculatus var. japonicus</name>
    <dbReference type="NCBI Taxonomy" id="34305"/>
    <lineage>
        <taxon>Eukaryota</taxon>
        <taxon>Viridiplantae</taxon>
        <taxon>Streptophyta</taxon>
        <taxon>Embryophyta</taxon>
        <taxon>Tracheophyta</taxon>
        <taxon>Spermatophyta</taxon>
        <taxon>Magnoliopsida</taxon>
        <taxon>eudicotyledons</taxon>
        <taxon>Gunneridae</taxon>
        <taxon>Pentapetalae</taxon>
        <taxon>rosids</taxon>
        <taxon>fabids</taxon>
        <taxon>Fabales</taxon>
        <taxon>Fabaceae</taxon>
        <taxon>Papilionoideae</taxon>
        <taxon>50 kb inversion clade</taxon>
        <taxon>NPAAA clade</taxon>
        <taxon>Hologalegina</taxon>
        <taxon>robinioid clade</taxon>
        <taxon>Loteae</taxon>
        <taxon>Lotus</taxon>
    </lineage>
</organism>
<keyword id="KW-0150">Chloroplast</keyword>
<keyword id="KW-0249">Electron transport</keyword>
<keyword id="KW-0472">Membrane</keyword>
<keyword id="KW-0602">Photosynthesis</keyword>
<keyword id="KW-0934">Plastid</keyword>
<keyword id="KW-0793">Thylakoid</keyword>
<keyword id="KW-0812">Transmembrane</keyword>
<keyword id="KW-1133">Transmembrane helix</keyword>
<keyword id="KW-0813">Transport</keyword>
<geneLocation type="chloroplast"/>
<comment type="function">
    <text evidence="1">Component of the cytochrome b6-f complex, which mediates electron transfer between photosystem II (PSII) and photosystem I (PSI), cyclic electron flow around PSI, and state transitions.</text>
</comment>
<comment type="subunit">
    <text evidence="1">The 4 large subunits of the cytochrome b6-f complex are cytochrome b6, subunit IV (17 kDa polypeptide, PetD), cytochrome f and the Rieske protein, while the 4 small subunits are PetG, PetL, PetM and PetN. The complex functions as a dimer (By similarity).</text>
</comment>
<comment type="subcellular location">
    <subcellularLocation>
        <location evidence="1">Plastid</location>
        <location evidence="1">Chloroplast thylakoid membrane</location>
        <topology evidence="1">Single-pass membrane protein</topology>
    </subcellularLocation>
</comment>
<comment type="similarity">
    <text evidence="3">Belongs to the PetN family.</text>
</comment>
<protein>
    <recommendedName>
        <fullName>Cytochrome b6-f complex subunit 8</fullName>
    </recommendedName>
    <alternativeName>
        <fullName>Cytochrome b6-f complex subunit PetN</fullName>
    </alternativeName>
    <alternativeName>
        <fullName>Cytochrome b6-f complex subunit VIII</fullName>
    </alternativeName>
</protein>
<name>PETN_LOTJA</name>
<reference key="1">
    <citation type="journal article" date="2000" name="DNA Res.">
        <title>Complete structure of the chloroplast genome of a legume, Lotus japonicus.</title>
        <authorList>
            <person name="Kato T."/>
            <person name="Kaneko T."/>
            <person name="Sato S."/>
            <person name="Nakamura Y."/>
            <person name="Tabata S."/>
        </authorList>
    </citation>
    <scope>NUCLEOTIDE SEQUENCE [LARGE SCALE GENOMIC DNA]</scope>
    <source>
        <strain>cv. Miyakojima MG-20</strain>
    </source>
</reference>
<sequence length="29" mass="3170">MDIVSLAWAALMVVFTFSLSLVVWGRSGL</sequence>
<gene>
    <name type="primary">petN</name>
    <name type="synonym">ycf6</name>
</gene>
<proteinExistence type="inferred from homology"/>
<dbReference type="EMBL" id="AP002983">
    <property type="protein sequence ID" value="BAB33193.1"/>
    <property type="molecule type" value="Genomic_DNA"/>
</dbReference>
<dbReference type="RefSeq" id="NP_084795.1">
    <property type="nucleotide sequence ID" value="NC_002694.1"/>
</dbReference>
<dbReference type="SMR" id="P61040"/>
<dbReference type="GeneID" id="802904"/>
<dbReference type="GO" id="GO:0009535">
    <property type="term" value="C:chloroplast thylakoid membrane"/>
    <property type="evidence" value="ECO:0007669"/>
    <property type="project" value="UniProtKB-SubCell"/>
</dbReference>
<dbReference type="GO" id="GO:0009512">
    <property type="term" value="C:cytochrome b6f complex"/>
    <property type="evidence" value="ECO:0007669"/>
    <property type="project" value="InterPro"/>
</dbReference>
<dbReference type="GO" id="GO:0045158">
    <property type="term" value="F:electron transporter, transferring electrons within cytochrome b6/f complex of photosystem II activity"/>
    <property type="evidence" value="ECO:0007669"/>
    <property type="project" value="InterPro"/>
</dbReference>
<dbReference type="GO" id="GO:0017004">
    <property type="term" value="P:cytochrome complex assembly"/>
    <property type="evidence" value="ECO:0007669"/>
    <property type="project" value="UniProtKB-UniRule"/>
</dbReference>
<dbReference type="GO" id="GO:0015979">
    <property type="term" value="P:photosynthesis"/>
    <property type="evidence" value="ECO:0007669"/>
    <property type="project" value="UniProtKB-KW"/>
</dbReference>
<dbReference type="HAMAP" id="MF_00395">
    <property type="entry name" value="Cytb6_f_PetN"/>
    <property type="match status" value="1"/>
</dbReference>
<dbReference type="InterPro" id="IPR036143">
    <property type="entry name" value="Cytochr_b6-f_cplx_su8_sf"/>
</dbReference>
<dbReference type="InterPro" id="IPR005497">
    <property type="entry name" value="Cytochrome_b6-f_cplx_su8"/>
</dbReference>
<dbReference type="Pfam" id="PF03742">
    <property type="entry name" value="PetN"/>
    <property type="match status" value="1"/>
</dbReference>
<dbReference type="SUPFAM" id="SSF103451">
    <property type="entry name" value="PetN subunit of the cytochrome b6f complex"/>
    <property type="match status" value="1"/>
</dbReference>
<feature type="chain" id="PRO_0000217112" description="Cytochrome b6-f complex subunit 8">
    <location>
        <begin position="1"/>
        <end position="29"/>
    </location>
</feature>
<feature type="transmembrane region" description="Helical" evidence="2">
    <location>
        <begin position="3"/>
        <end position="23"/>
    </location>
</feature>
<accession>P61040</accession>
<accession>P12178</accession>
<accession>P56789</accession>